<proteinExistence type="inferred from homology"/>
<protein>
    <recommendedName>
        <fullName evidence="1">Dual-specificity RNA methyltransferase RlmN</fullName>
        <ecNumber evidence="1">2.1.1.192</ecNumber>
    </recommendedName>
    <alternativeName>
        <fullName evidence="1">23S rRNA (adenine(2503)-C(2))-methyltransferase</fullName>
    </alternativeName>
    <alternativeName>
        <fullName evidence="1">23S rRNA m2A2503 methyltransferase</fullName>
    </alternativeName>
    <alternativeName>
        <fullName evidence="1">Ribosomal RNA large subunit methyltransferase N</fullName>
    </alternativeName>
    <alternativeName>
        <fullName evidence="1">tRNA (adenine(37)-C(2))-methyltransferase</fullName>
    </alternativeName>
    <alternativeName>
        <fullName evidence="1">tRNA m2A37 methyltransferase</fullName>
    </alternativeName>
</protein>
<organism>
    <name type="scientific">Campylobacter jejuni (strain RM1221)</name>
    <dbReference type="NCBI Taxonomy" id="195099"/>
    <lineage>
        <taxon>Bacteria</taxon>
        <taxon>Pseudomonadati</taxon>
        <taxon>Campylobacterota</taxon>
        <taxon>Epsilonproteobacteria</taxon>
        <taxon>Campylobacterales</taxon>
        <taxon>Campylobacteraceae</taxon>
        <taxon>Campylobacter</taxon>
    </lineage>
</organism>
<gene>
    <name evidence="1" type="primary">rlmN</name>
    <name type="ordered locus">CJE1882</name>
</gene>
<comment type="function">
    <text evidence="1">Specifically methylates position 2 of adenine 2503 in 23S rRNA and position 2 of adenine 37 in tRNAs. m2A2503 modification seems to play a crucial role in the proofreading step occurring at the peptidyl transferase center and thus would serve to optimize ribosomal fidelity.</text>
</comment>
<comment type="catalytic activity">
    <reaction evidence="1">
        <text>adenosine(2503) in 23S rRNA + 2 reduced [2Fe-2S]-[ferredoxin] + 2 S-adenosyl-L-methionine = 2-methyladenosine(2503) in 23S rRNA + 5'-deoxyadenosine + L-methionine + 2 oxidized [2Fe-2S]-[ferredoxin] + S-adenosyl-L-homocysteine</text>
        <dbReference type="Rhea" id="RHEA:42916"/>
        <dbReference type="Rhea" id="RHEA-COMP:10000"/>
        <dbReference type="Rhea" id="RHEA-COMP:10001"/>
        <dbReference type="Rhea" id="RHEA-COMP:10152"/>
        <dbReference type="Rhea" id="RHEA-COMP:10282"/>
        <dbReference type="ChEBI" id="CHEBI:17319"/>
        <dbReference type="ChEBI" id="CHEBI:33737"/>
        <dbReference type="ChEBI" id="CHEBI:33738"/>
        <dbReference type="ChEBI" id="CHEBI:57844"/>
        <dbReference type="ChEBI" id="CHEBI:57856"/>
        <dbReference type="ChEBI" id="CHEBI:59789"/>
        <dbReference type="ChEBI" id="CHEBI:74411"/>
        <dbReference type="ChEBI" id="CHEBI:74497"/>
        <dbReference type="EC" id="2.1.1.192"/>
    </reaction>
</comment>
<comment type="catalytic activity">
    <reaction evidence="1">
        <text>adenosine(37) in tRNA + 2 reduced [2Fe-2S]-[ferredoxin] + 2 S-adenosyl-L-methionine = 2-methyladenosine(37) in tRNA + 5'-deoxyadenosine + L-methionine + 2 oxidized [2Fe-2S]-[ferredoxin] + S-adenosyl-L-homocysteine</text>
        <dbReference type="Rhea" id="RHEA:43332"/>
        <dbReference type="Rhea" id="RHEA-COMP:10000"/>
        <dbReference type="Rhea" id="RHEA-COMP:10001"/>
        <dbReference type="Rhea" id="RHEA-COMP:10162"/>
        <dbReference type="Rhea" id="RHEA-COMP:10485"/>
        <dbReference type="ChEBI" id="CHEBI:17319"/>
        <dbReference type="ChEBI" id="CHEBI:33737"/>
        <dbReference type="ChEBI" id="CHEBI:33738"/>
        <dbReference type="ChEBI" id="CHEBI:57844"/>
        <dbReference type="ChEBI" id="CHEBI:57856"/>
        <dbReference type="ChEBI" id="CHEBI:59789"/>
        <dbReference type="ChEBI" id="CHEBI:74411"/>
        <dbReference type="ChEBI" id="CHEBI:74497"/>
        <dbReference type="EC" id="2.1.1.192"/>
    </reaction>
</comment>
<comment type="cofactor">
    <cofactor evidence="1">
        <name>[4Fe-4S] cluster</name>
        <dbReference type="ChEBI" id="CHEBI:49883"/>
    </cofactor>
    <text evidence="1">Binds 1 [4Fe-4S] cluster. The cluster is coordinated with 3 cysteines and an exchangeable S-adenosyl-L-methionine.</text>
</comment>
<comment type="subcellular location">
    <subcellularLocation>
        <location evidence="1">Cytoplasm</location>
    </subcellularLocation>
</comment>
<comment type="miscellaneous">
    <text evidence="1">Reaction proceeds by a ping-pong mechanism involving intermediate methylation of a conserved cysteine residue.</text>
</comment>
<comment type="similarity">
    <text evidence="1">Belongs to the radical SAM superfamily. RlmN family.</text>
</comment>
<name>RLMN_CAMJR</name>
<keyword id="KW-0004">4Fe-4S</keyword>
<keyword id="KW-0963">Cytoplasm</keyword>
<keyword id="KW-1015">Disulfide bond</keyword>
<keyword id="KW-0408">Iron</keyword>
<keyword id="KW-0411">Iron-sulfur</keyword>
<keyword id="KW-0479">Metal-binding</keyword>
<keyword id="KW-0489">Methyltransferase</keyword>
<keyword id="KW-0698">rRNA processing</keyword>
<keyword id="KW-0949">S-adenosyl-L-methionine</keyword>
<keyword id="KW-0808">Transferase</keyword>
<keyword id="KW-0819">tRNA processing</keyword>
<sequence>MKELVNILDFLPEELGEKIKPMFRVKQIYQWIYQKYANNFSDMSSLPKDLRLELAQNFHFSPVKCVKNEQSKDGSIKYLFELVDGLRIESVLLPMKEEKIDAEGKRISHARYTICVSSQVGCKSGCSFCLTAKGGLKRNLSAGEIVGQILWIKKQNNIPYERRINIVYMGMGEPLDNLKNVSKAVKILAQNEGLAISPRRQTISTSGLAKQIKELGQMNLGVLLAISLHAVNDELRTELMPINKAYNIAAIMDAVREFPIDQRKRVMFEYLLIDGINDKLEHAKELVKLLNGIKAKVNLILFNPHEGGLYKRPSLENAIKFQDLLSNKGVTCTIRESKGLDISAACGQLKERAKEQ</sequence>
<feature type="chain" id="PRO_0000350095" description="Dual-specificity RNA methyltransferase RlmN">
    <location>
        <begin position="1"/>
        <end position="356"/>
    </location>
</feature>
<feature type="domain" description="Radical SAM core" evidence="2">
    <location>
        <begin position="108"/>
        <end position="341"/>
    </location>
</feature>
<feature type="active site" description="Proton acceptor" evidence="1">
    <location>
        <position position="89"/>
    </location>
</feature>
<feature type="active site" description="S-methylcysteine intermediate" evidence="1">
    <location>
        <position position="346"/>
    </location>
</feature>
<feature type="binding site" evidence="1">
    <location>
        <position position="122"/>
    </location>
    <ligand>
        <name>[4Fe-4S] cluster</name>
        <dbReference type="ChEBI" id="CHEBI:49883"/>
        <note>4Fe-4S-S-AdoMet</note>
    </ligand>
</feature>
<feature type="binding site" evidence="1">
    <location>
        <position position="126"/>
    </location>
    <ligand>
        <name>[4Fe-4S] cluster</name>
        <dbReference type="ChEBI" id="CHEBI:49883"/>
        <note>4Fe-4S-S-AdoMet</note>
    </ligand>
</feature>
<feature type="binding site" evidence="1">
    <location>
        <position position="129"/>
    </location>
    <ligand>
        <name>[4Fe-4S] cluster</name>
        <dbReference type="ChEBI" id="CHEBI:49883"/>
        <note>4Fe-4S-S-AdoMet</note>
    </ligand>
</feature>
<feature type="binding site" evidence="1">
    <location>
        <begin position="172"/>
        <end position="173"/>
    </location>
    <ligand>
        <name>S-adenosyl-L-methionine</name>
        <dbReference type="ChEBI" id="CHEBI:59789"/>
    </ligand>
</feature>
<feature type="binding site" evidence="1">
    <location>
        <position position="204"/>
    </location>
    <ligand>
        <name>S-adenosyl-L-methionine</name>
        <dbReference type="ChEBI" id="CHEBI:59789"/>
    </ligand>
</feature>
<feature type="binding site" evidence="1">
    <location>
        <begin position="227"/>
        <end position="229"/>
    </location>
    <ligand>
        <name>S-adenosyl-L-methionine</name>
        <dbReference type="ChEBI" id="CHEBI:59789"/>
    </ligand>
</feature>
<feature type="binding site" evidence="1">
    <location>
        <position position="303"/>
    </location>
    <ligand>
        <name>S-adenosyl-L-methionine</name>
        <dbReference type="ChEBI" id="CHEBI:59789"/>
    </ligand>
</feature>
<feature type="disulfide bond" description="(transient)" evidence="1">
    <location>
        <begin position="115"/>
        <end position="346"/>
    </location>
</feature>
<dbReference type="EC" id="2.1.1.192" evidence="1"/>
<dbReference type="EMBL" id="CP000025">
    <property type="protein sequence ID" value="AAW34482.1"/>
    <property type="molecule type" value="Genomic_DNA"/>
</dbReference>
<dbReference type="RefSeq" id="WP_002867514.1">
    <property type="nucleotide sequence ID" value="NC_003912.7"/>
</dbReference>
<dbReference type="SMR" id="Q5HS83"/>
<dbReference type="KEGG" id="cjr:CJE1882"/>
<dbReference type="HOGENOM" id="CLU_029101_2_0_7"/>
<dbReference type="GO" id="GO:0005737">
    <property type="term" value="C:cytoplasm"/>
    <property type="evidence" value="ECO:0007669"/>
    <property type="project" value="UniProtKB-SubCell"/>
</dbReference>
<dbReference type="GO" id="GO:0051539">
    <property type="term" value="F:4 iron, 4 sulfur cluster binding"/>
    <property type="evidence" value="ECO:0007669"/>
    <property type="project" value="UniProtKB-UniRule"/>
</dbReference>
<dbReference type="GO" id="GO:0046872">
    <property type="term" value="F:metal ion binding"/>
    <property type="evidence" value="ECO:0007669"/>
    <property type="project" value="UniProtKB-KW"/>
</dbReference>
<dbReference type="GO" id="GO:0070040">
    <property type="term" value="F:rRNA (adenine(2503)-C2-)-methyltransferase activity"/>
    <property type="evidence" value="ECO:0007669"/>
    <property type="project" value="UniProtKB-UniRule"/>
</dbReference>
<dbReference type="GO" id="GO:0019843">
    <property type="term" value="F:rRNA binding"/>
    <property type="evidence" value="ECO:0007669"/>
    <property type="project" value="UniProtKB-UniRule"/>
</dbReference>
<dbReference type="GO" id="GO:0002935">
    <property type="term" value="F:tRNA (adenine(37)-C2)-methyltransferase activity"/>
    <property type="evidence" value="ECO:0007669"/>
    <property type="project" value="UniProtKB-UniRule"/>
</dbReference>
<dbReference type="GO" id="GO:0000049">
    <property type="term" value="F:tRNA binding"/>
    <property type="evidence" value="ECO:0007669"/>
    <property type="project" value="UniProtKB-UniRule"/>
</dbReference>
<dbReference type="GO" id="GO:0070475">
    <property type="term" value="P:rRNA base methylation"/>
    <property type="evidence" value="ECO:0007669"/>
    <property type="project" value="UniProtKB-UniRule"/>
</dbReference>
<dbReference type="GO" id="GO:0030488">
    <property type="term" value="P:tRNA methylation"/>
    <property type="evidence" value="ECO:0007669"/>
    <property type="project" value="UniProtKB-UniRule"/>
</dbReference>
<dbReference type="CDD" id="cd01335">
    <property type="entry name" value="Radical_SAM"/>
    <property type="match status" value="1"/>
</dbReference>
<dbReference type="FunFam" id="3.20.20.70:FF:000014">
    <property type="entry name" value="Probable dual-specificity RNA methyltransferase RlmN"/>
    <property type="match status" value="1"/>
</dbReference>
<dbReference type="Gene3D" id="1.10.150.530">
    <property type="match status" value="1"/>
</dbReference>
<dbReference type="Gene3D" id="3.20.20.70">
    <property type="entry name" value="Aldolase class I"/>
    <property type="match status" value="1"/>
</dbReference>
<dbReference type="HAMAP" id="MF_01849">
    <property type="entry name" value="RNA_methyltr_RlmN"/>
    <property type="match status" value="1"/>
</dbReference>
<dbReference type="InterPro" id="IPR013785">
    <property type="entry name" value="Aldolase_TIM"/>
</dbReference>
<dbReference type="InterPro" id="IPR006638">
    <property type="entry name" value="Elp3/MiaA/NifB-like_rSAM"/>
</dbReference>
<dbReference type="InterPro" id="IPR040072">
    <property type="entry name" value="Methyltransferase_A"/>
</dbReference>
<dbReference type="InterPro" id="IPR048641">
    <property type="entry name" value="RlmN_N"/>
</dbReference>
<dbReference type="InterPro" id="IPR027492">
    <property type="entry name" value="RNA_MTrfase_RlmN"/>
</dbReference>
<dbReference type="InterPro" id="IPR004383">
    <property type="entry name" value="rRNA_lsu_MTrfase_RlmN/Cfr"/>
</dbReference>
<dbReference type="InterPro" id="IPR007197">
    <property type="entry name" value="rSAM"/>
</dbReference>
<dbReference type="NCBIfam" id="TIGR00048">
    <property type="entry name" value="rRNA_mod_RlmN"/>
    <property type="match status" value="1"/>
</dbReference>
<dbReference type="PANTHER" id="PTHR30544">
    <property type="entry name" value="23S RRNA METHYLTRANSFERASE"/>
    <property type="match status" value="1"/>
</dbReference>
<dbReference type="PANTHER" id="PTHR30544:SF5">
    <property type="entry name" value="RADICAL SAM CORE DOMAIN-CONTAINING PROTEIN"/>
    <property type="match status" value="1"/>
</dbReference>
<dbReference type="Pfam" id="PF04055">
    <property type="entry name" value="Radical_SAM"/>
    <property type="match status" value="1"/>
</dbReference>
<dbReference type="Pfam" id="PF21016">
    <property type="entry name" value="RlmN_N"/>
    <property type="match status" value="1"/>
</dbReference>
<dbReference type="PIRSF" id="PIRSF006004">
    <property type="entry name" value="CHP00048"/>
    <property type="match status" value="1"/>
</dbReference>
<dbReference type="SFLD" id="SFLDF00275">
    <property type="entry name" value="adenosine_C2_methyltransferase"/>
    <property type="match status" value="1"/>
</dbReference>
<dbReference type="SFLD" id="SFLDS00029">
    <property type="entry name" value="Radical_SAM"/>
    <property type="match status" value="1"/>
</dbReference>
<dbReference type="SMART" id="SM00729">
    <property type="entry name" value="Elp3"/>
    <property type="match status" value="1"/>
</dbReference>
<dbReference type="SUPFAM" id="SSF102114">
    <property type="entry name" value="Radical SAM enzymes"/>
    <property type="match status" value="1"/>
</dbReference>
<dbReference type="PROSITE" id="PS51918">
    <property type="entry name" value="RADICAL_SAM"/>
    <property type="match status" value="1"/>
</dbReference>
<evidence type="ECO:0000255" key="1">
    <source>
        <dbReference type="HAMAP-Rule" id="MF_01849"/>
    </source>
</evidence>
<evidence type="ECO:0000255" key="2">
    <source>
        <dbReference type="PROSITE-ProRule" id="PRU01266"/>
    </source>
</evidence>
<reference key="1">
    <citation type="journal article" date="2005" name="PLoS Biol.">
        <title>Major structural differences and novel potential virulence mechanisms from the genomes of multiple Campylobacter species.</title>
        <authorList>
            <person name="Fouts D.E."/>
            <person name="Mongodin E.F."/>
            <person name="Mandrell R.E."/>
            <person name="Miller W.G."/>
            <person name="Rasko D.A."/>
            <person name="Ravel J."/>
            <person name="Brinkac L.M."/>
            <person name="DeBoy R.T."/>
            <person name="Parker C.T."/>
            <person name="Daugherty S.C."/>
            <person name="Dodson R.J."/>
            <person name="Durkin A.S."/>
            <person name="Madupu R."/>
            <person name="Sullivan S.A."/>
            <person name="Shetty J.U."/>
            <person name="Ayodeji M.A."/>
            <person name="Shvartsbeyn A."/>
            <person name="Schatz M.C."/>
            <person name="Badger J.H."/>
            <person name="Fraser C.M."/>
            <person name="Nelson K.E."/>
        </authorList>
    </citation>
    <scope>NUCLEOTIDE SEQUENCE [LARGE SCALE GENOMIC DNA]</scope>
    <source>
        <strain>RM1221</strain>
    </source>
</reference>
<accession>Q5HS83</accession>